<evidence type="ECO:0000255" key="1">
    <source>
        <dbReference type="HAMAP-Rule" id="MF_00110"/>
    </source>
</evidence>
<gene>
    <name evidence="1" type="primary">aroB</name>
    <name type="ordered locus">SNSL254_A3758</name>
</gene>
<comment type="function">
    <text evidence="1">Catalyzes the conversion of 3-deoxy-D-arabino-heptulosonate 7-phosphate (DAHP) to dehydroquinate (DHQ).</text>
</comment>
<comment type="catalytic activity">
    <reaction evidence="1">
        <text>7-phospho-2-dehydro-3-deoxy-D-arabino-heptonate = 3-dehydroquinate + phosphate</text>
        <dbReference type="Rhea" id="RHEA:21968"/>
        <dbReference type="ChEBI" id="CHEBI:32364"/>
        <dbReference type="ChEBI" id="CHEBI:43474"/>
        <dbReference type="ChEBI" id="CHEBI:58394"/>
        <dbReference type="EC" id="4.2.3.4"/>
    </reaction>
</comment>
<comment type="cofactor">
    <cofactor evidence="1">
        <name>Co(2+)</name>
        <dbReference type="ChEBI" id="CHEBI:48828"/>
    </cofactor>
    <cofactor evidence="1">
        <name>Zn(2+)</name>
        <dbReference type="ChEBI" id="CHEBI:29105"/>
    </cofactor>
    <text evidence="1">Binds 1 divalent metal cation per subunit. Can use either Co(2+) or Zn(2+).</text>
</comment>
<comment type="cofactor">
    <cofactor evidence="1">
        <name>NAD(+)</name>
        <dbReference type="ChEBI" id="CHEBI:57540"/>
    </cofactor>
</comment>
<comment type="pathway">
    <text evidence="1">Metabolic intermediate biosynthesis; chorismate biosynthesis; chorismate from D-erythrose 4-phosphate and phosphoenolpyruvate: step 2/7.</text>
</comment>
<comment type="subcellular location">
    <subcellularLocation>
        <location evidence="1">Cytoplasm</location>
    </subcellularLocation>
</comment>
<comment type="similarity">
    <text evidence="1">Belongs to the sugar phosphate cyclases superfamily. Dehydroquinate synthase family.</text>
</comment>
<name>AROB_SALNS</name>
<keyword id="KW-0028">Amino-acid biosynthesis</keyword>
<keyword id="KW-0057">Aromatic amino acid biosynthesis</keyword>
<keyword id="KW-0170">Cobalt</keyword>
<keyword id="KW-0963">Cytoplasm</keyword>
<keyword id="KW-0456">Lyase</keyword>
<keyword id="KW-0479">Metal-binding</keyword>
<keyword id="KW-0520">NAD</keyword>
<keyword id="KW-0547">Nucleotide-binding</keyword>
<keyword id="KW-0862">Zinc</keyword>
<proteinExistence type="inferred from homology"/>
<accession>B4SVI8</accession>
<feature type="chain" id="PRO_1000094600" description="3-dehydroquinate synthase">
    <location>
        <begin position="1"/>
        <end position="362"/>
    </location>
</feature>
<feature type="binding site" evidence="1">
    <location>
        <begin position="71"/>
        <end position="76"/>
    </location>
    <ligand>
        <name>NAD(+)</name>
        <dbReference type="ChEBI" id="CHEBI:57540"/>
    </ligand>
</feature>
<feature type="binding site" evidence="1">
    <location>
        <begin position="105"/>
        <end position="109"/>
    </location>
    <ligand>
        <name>NAD(+)</name>
        <dbReference type="ChEBI" id="CHEBI:57540"/>
    </ligand>
</feature>
<feature type="binding site" evidence="1">
    <location>
        <begin position="129"/>
        <end position="130"/>
    </location>
    <ligand>
        <name>NAD(+)</name>
        <dbReference type="ChEBI" id="CHEBI:57540"/>
    </ligand>
</feature>
<feature type="binding site" evidence="1">
    <location>
        <position position="142"/>
    </location>
    <ligand>
        <name>NAD(+)</name>
        <dbReference type="ChEBI" id="CHEBI:57540"/>
    </ligand>
</feature>
<feature type="binding site" evidence="1">
    <location>
        <position position="151"/>
    </location>
    <ligand>
        <name>NAD(+)</name>
        <dbReference type="ChEBI" id="CHEBI:57540"/>
    </ligand>
</feature>
<feature type="binding site" evidence="1">
    <location>
        <begin position="169"/>
        <end position="172"/>
    </location>
    <ligand>
        <name>NAD(+)</name>
        <dbReference type="ChEBI" id="CHEBI:57540"/>
    </ligand>
</feature>
<feature type="binding site" evidence="1">
    <location>
        <position position="184"/>
    </location>
    <ligand>
        <name>Zn(2+)</name>
        <dbReference type="ChEBI" id="CHEBI:29105"/>
    </ligand>
</feature>
<feature type="binding site" evidence="1">
    <location>
        <position position="247"/>
    </location>
    <ligand>
        <name>Zn(2+)</name>
        <dbReference type="ChEBI" id="CHEBI:29105"/>
    </ligand>
</feature>
<feature type="binding site" evidence="1">
    <location>
        <position position="264"/>
    </location>
    <ligand>
        <name>Zn(2+)</name>
        <dbReference type="ChEBI" id="CHEBI:29105"/>
    </ligand>
</feature>
<protein>
    <recommendedName>
        <fullName evidence="1">3-dehydroquinate synthase</fullName>
        <shortName evidence="1">DHQS</shortName>
        <ecNumber evidence="1">4.2.3.4</ecNumber>
    </recommendedName>
</protein>
<reference key="1">
    <citation type="journal article" date="2011" name="J. Bacteriol.">
        <title>Comparative genomics of 28 Salmonella enterica isolates: evidence for CRISPR-mediated adaptive sublineage evolution.</title>
        <authorList>
            <person name="Fricke W.F."/>
            <person name="Mammel M.K."/>
            <person name="McDermott P.F."/>
            <person name="Tartera C."/>
            <person name="White D.G."/>
            <person name="Leclerc J.E."/>
            <person name="Ravel J."/>
            <person name="Cebula T.A."/>
        </authorList>
    </citation>
    <scope>NUCLEOTIDE SEQUENCE [LARGE SCALE GENOMIC DNA]</scope>
    <source>
        <strain>SL254</strain>
    </source>
</reference>
<organism>
    <name type="scientific">Salmonella newport (strain SL254)</name>
    <dbReference type="NCBI Taxonomy" id="423368"/>
    <lineage>
        <taxon>Bacteria</taxon>
        <taxon>Pseudomonadati</taxon>
        <taxon>Pseudomonadota</taxon>
        <taxon>Gammaproteobacteria</taxon>
        <taxon>Enterobacterales</taxon>
        <taxon>Enterobacteriaceae</taxon>
        <taxon>Salmonella</taxon>
    </lineage>
</organism>
<sequence length="362" mass="38680">MERITVTLGERSYPITIAAGLFNEPASFLPLKSGDQVMLVTNETLAPLYLDKVRGVLERAGVNVDSVILPDGEQYKSLTVLDTVFTALLKKPHGRDTTLVALGGGVIGDLTGFAAASYQRGVRFIQVPTTLLSQVDSSVGGKTAVNHPLGKNMIGAFYQPASVVVDLDCLKTLPARELASGLAEVIKYGIILDADFFTWLEGNLDALLRLDGPAMAYCIRRCCELKAEVVAADEREAGLRALLNLGHTFGHAIEAEMGYGNWLHGEAVAAGIVMAARASERLGQFSSADTQRIIALLERAGLPVNGPCEMSAQDYLPHMLRDKKVLAGELRLVLPLAIGKSEVRGGVSHEVVLSAIADCQQA</sequence>
<dbReference type="EC" id="4.2.3.4" evidence="1"/>
<dbReference type="EMBL" id="CP001113">
    <property type="protein sequence ID" value="ACF63704.1"/>
    <property type="molecule type" value="Genomic_DNA"/>
</dbReference>
<dbReference type="RefSeq" id="WP_000439824.1">
    <property type="nucleotide sequence ID" value="NZ_CCMR01000004.1"/>
</dbReference>
<dbReference type="SMR" id="B4SVI8"/>
<dbReference type="KEGG" id="see:SNSL254_A3758"/>
<dbReference type="HOGENOM" id="CLU_001201_0_2_6"/>
<dbReference type="UniPathway" id="UPA00053">
    <property type="reaction ID" value="UER00085"/>
</dbReference>
<dbReference type="Proteomes" id="UP000008824">
    <property type="component" value="Chromosome"/>
</dbReference>
<dbReference type="GO" id="GO:0005737">
    <property type="term" value="C:cytoplasm"/>
    <property type="evidence" value="ECO:0007669"/>
    <property type="project" value="UniProtKB-SubCell"/>
</dbReference>
<dbReference type="GO" id="GO:0003856">
    <property type="term" value="F:3-dehydroquinate synthase activity"/>
    <property type="evidence" value="ECO:0007669"/>
    <property type="project" value="UniProtKB-UniRule"/>
</dbReference>
<dbReference type="GO" id="GO:0046872">
    <property type="term" value="F:metal ion binding"/>
    <property type="evidence" value="ECO:0007669"/>
    <property type="project" value="UniProtKB-KW"/>
</dbReference>
<dbReference type="GO" id="GO:0000166">
    <property type="term" value="F:nucleotide binding"/>
    <property type="evidence" value="ECO:0007669"/>
    <property type="project" value="UniProtKB-KW"/>
</dbReference>
<dbReference type="GO" id="GO:0008652">
    <property type="term" value="P:amino acid biosynthetic process"/>
    <property type="evidence" value="ECO:0007669"/>
    <property type="project" value="UniProtKB-KW"/>
</dbReference>
<dbReference type="GO" id="GO:0009073">
    <property type="term" value="P:aromatic amino acid family biosynthetic process"/>
    <property type="evidence" value="ECO:0007669"/>
    <property type="project" value="UniProtKB-KW"/>
</dbReference>
<dbReference type="GO" id="GO:0009423">
    <property type="term" value="P:chorismate biosynthetic process"/>
    <property type="evidence" value="ECO:0007669"/>
    <property type="project" value="UniProtKB-UniRule"/>
</dbReference>
<dbReference type="CDD" id="cd08195">
    <property type="entry name" value="DHQS"/>
    <property type="match status" value="1"/>
</dbReference>
<dbReference type="FunFam" id="1.20.1090.10:FF:000002">
    <property type="entry name" value="3-dehydroquinate synthase"/>
    <property type="match status" value="1"/>
</dbReference>
<dbReference type="FunFam" id="3.40.50.1970:FF:000001">
    <property type="entry name" value="3-dehydroquinate synthase"/>
    <property type="match status" value="1"/>
</dbReference>
<dbReference type="Gene3D" id="3.40.50.1970">
    <property type="match status" value="1"/>
</dbReference>
<dbReference type="Gene3D" id="1.20.1090.10">
    <property type="entry name" value="Dehydroquinate synthase-like - alpha domain"/>
    <property type="match status" value="1"/>
</dbReference>
<dbReference type="HAMAP" id="MF_00110">
    <property type="entry name" value="DHQ_synthase"/>
    <property type="match status" value="1"/>
</dbReference>
<dbReference type="InterPro" id="IPR050071">
    <property type="entry name" value="Dehydroquinate_synthase"/>
</dbReference>
<dbReference type="InterPro" id="IPR016037">
    <property type="entry name" value="DHQ_synth_AroB"/>
</dbReference>
<dbReference type="InterPro" id="IPR030963">
    <property type="entry name" value="DHQ_synth_fam"/>
</dbReference>
<dbReference type="InterPro" id="IPR030960">
    <property type="entry name" value="DHQS/DOIS_N"/>
</dbReference>
<dbReference type="InterPro" id="IPR056179">
    <property type="entry name" value="DHQS_C"/>
</dbReference>
<dbReference type="NCBIfam" id="TIGR01357">
    <property type="entry name" value="aroB"/>
    <property type="match status" value="1"/>
</dbReference>
<dbReference type="PANTHER" id="PTHR43622">
    <property type="entry name" value="3-DEHYDROQUINATE SYNTHASE"/>
    <property type="match status" value="1"/>
</dbReference>
<dbReference type="PANTHER" id="PTHR43622:SF7">
    <property type="entry name" value="3-DEHYDROQUINATE SYNTHASE, CHLOROPLASTIC"/>
    <property type="match status" value="1"/>
</dbReference>
<dbReference type="Pfam" id="PF01761">
    <property type="entry name" value="DHQ_synthase"/>
    <property type="match status" value="1"/>
</dbReference>
<dbReference type="Pfam" id="PF24621">
    <property type="entry name" value="DHQS_C"/>
    <property type="match status" value="1"/>
</dbReference>
<dbReference type="PIRSF" id="PIRSF001455">
    <property type="entry name" value="DHQ_synth"/>
    <property type="match status" value="1"/>
</dbReference>
<dbReference type="SUPFAM" id="SSF56796">
    <property type="entry name" value="Dehydroquinate synthase-like"/>
    <property type="match status" value="1"/>
</dbReference>